<comment type="function">
    <text evidence="1">Probably acts as a transcriptional activator. Binds to the GCC-box pathogenesis-related promoter element. May be involved in the regulation of gene expression by stress factors and by components of stress signal transduction pathways (By similarity).</text>
</comment>
<comment type="subcellular location">
    <subcellularLocation>
        <location evidence="4">Nucleus</location>
    </subcellularLocation>
</comment>
<comment type="similarity">
    <text evidence="4">Belongs to the AP2/ERF transcription factor family. ERF subfamily.</text>
</comment>
<protein>
    <recommendedName>
        <fullName>Ethylene-responsive transcription factor ERF106</fullName>
    </recommendedName>
</protein>
<sequence length="207" mass="23146">MASFEESSDLEAIQSHLLEDLLVCDGFMGDFDFDASFVSGLWCIEPHVPKQEPDSPVLDPDSFVNEFLQVEGESSSSSSPELNSSSSTYETDQSVKKAERFEEEVDARHYRGVRRRPWGKFAAEIRDPAKKGSRIWLGTFESDVDAARAYDCAAFKLRGRKAVLNFPLDAGKYEAPANSGRKRKRSDVHEELQRTQSNSSSSSCDAF</sequence>
<proteinExistence type="evidence at transcript level"/>
<gene>
    <name type="primary">ERF106</name>
    <name type="ordered locus">At5g07580</name>
    <name type="ORF">MBK20.1</name>
    <name type="ORF">T2I1.290</name>
</gene>
<keyword id="KW-0010">Activator</keyword>
<keyword id="KW-0238">DNA-binding</keyword>
<keyword id="KW-0936">Ethylene signaling pathway</keyword>
<keyword id="KW-0539">Nucleus</keyword>
<keyword id="KW-1185">Reference proteome</keyword>
<keyword id="KW-0804">Transcription</keyword>
<keyword id="KW-0805">Transcription regulation</keyword>
<accession>Q9LY05</accession>
<accession>F4K831</accession>
<dbReference type="EMBL" id="AB010070">
    <property type="protein sequence ID" value="BAB11436.1"/>
    <property type="molecule type" value="Genomic_DNA"/>
</dbReference>
<dbReference type="EMBL" id="AL163912">
    <property type="protein sequence ID" value="CAB87947.1"/>
    <property type="molecule type" value="Genomic_DNA"/>
</dbReference>
<dbReference type="EMBL" id="CP002688">
    <property type="protein sequence ID" value="AED91182.2"/>
    <property type="molecule type" value="Genomic_DNA"/>
</dbReference>
<dbReference type="EMBL" id="AY052266">
    <property type="protein sequence ID" value="AAK97736.1"/>
    <property type="molecule type" value="mRNA"/>
</dbReference>
<dbReference type="EMBL" id="AY060524">
    <property type="protein sequence ID" value="AAL31137.1"/>
    <property type="molecule type" value="mRNA"/>
</dbReference>
<dbReference type="PIR" id="T49897">
    <property type="entry name" value="T49897"/>
</dbReference>
<dbReference type="RefSeq" id="NP_196375.3">
    <property type="nucleotide sequence ID" value="NM_120840.3"/>
</dbReference>
<dbReference type="SMR" id="Q9LY05"/>
<dbReference type="BioGRID" id="15930">
    <property type="interactions" value="4"/>
</dbReference>
<dbReference type="FunCoup" id="Q9LY05">
    <property type="interactions" value="68"/>
</dbReference>
<dbReference type="STRING" id="3702.Q9LY05"/>
<dbReference type="PaxDb" id="3702-AT5G07580.1"/>
<dbReference type="ProteomicsDB" id="224731"/>
<dbReference type="EnsemblPlants" id="AT5G07580.1">
    <property type="protein sequence ID" value="AT5G07580.1"/>
    <property type="gene ID" value="AT5G07580"/>
</dbReference>
<dbReference type="GeneID" id="830651"/>
<dbReference type="Gramene" id="AT5G07580.1">
    <property type="protein sequence ID" value="AT5G07580.1"/>
    <property type="gene ID" value="AT5G07580"/>
</dbReference>
<dbReference type="KEGG" id="ath:AT5G07580"/>
<dbReference type="Araport" id="AT5G07580"/>
<dbReference type="TAIR" id="AT5G07580">
    <property type="gene designation" value="ERF106"/>
</dbReference>
<dbReference type="eggNOG" id="ENOG502RZ4F">
    <property type="taxonomic scope" value="Eukaryota"/>
</dbReference>
<dbReference type="HOGENOM" id="CLU_058713_0_2_1"/>
<dbReference type="InParanoid" id="Q9LY05"/>
<dbReference type="OMA" id="CDGFMGD"/>
<dbReference type="OrthoDB" id="674504at2759"/>
<dbReference type="PhylomeDB" id="Q9LY05"/>
<dbReference type="PRO" id="PR:Q9LY05"/>
<dbReference type="Proteomes" id="UP000006548">
    <property type="component" value="Chromosome 5"/>
</dbReference>
<dbReference type="ExpressionAtlas" id="Q9LY05">
    <property type="expression patterns" value="baseline and differential"/>
</dbReference>
<dbReference type="GO" id="GO:0005634">
    <property type="term" value="C:nucleus"/>
    <property type="evidence" value="ECO:0007669"/>
    <property type="project" value="UniProtKB-SubCell"/>
</dbReference>
<dbReference type="GO" id="GO:0003700">
    <property type="term" value="F:DNA-binding transcription factor activity"/>
    <property type="evidence" value="ECO:0007669"/>
    <property type="project" value="InterPro"/>
</dbReference>
<dbReference type="GO" id="GO:0000976">
    <property type="term" value="F:transcription cis-regulatory region binding"/>
    <property type="evidence" value="ECO:0007669"/>
    <property type="project" value="UniProtKB-ARBA"/>
</dbReference>
<dbReference type="GO" id="GO:0009873">
    <property type="term" value="P:ethylene-activated signaling pathway"/>
    <property type="evidence" value="ECO:0007669"/>
    <property type="project" value="UniProtKB-KW"/>
</dbReference>
<dbReference type="GO" id="GO:0006950">
    <property type="term" value="P:response to stress"/>
    <property type="evidence" value="ECO:0007669"/>
    <property type="project" value="UniProtKB-ARBA"/>
</dbReference>
<dbReference type="CDD" id="cd00018">
    <property type="entry name" value="AP2"/>
    <property type="match status" value="1"/>
</dbReference>
<dbReference type="FunFam" id="3.30.730.10:FF:000001">
    <property type="entry name" value="Ethylene-responsive transcription factor 2"/>
    <property type="match status" value="1"/>
</dbReference>
<dbReference type="Gene3D" id="3.30.730.10">
    <property type="entry name" value="AP2/ERF domain"/>
    <property type="match status" value="1"/>
</dbReference>
<dbReference type="InterPro" id="IPR001471">
    <property type="entry name" value="AP2/ERF_dom"/>
</dbReference>
<dbReference type="InterPro" id="IPR036955">
    <property type="entry name" value="AP2/ERF_dom_sf"/>
</dbReference>
<dbReference type="InterPro" id="IPR016177">
    <property type="entry name" value="DNA-bd_dom_sf"/>
</dbReference>
<dbReference type="InterPro" id="IPR044808">
    <property type="entry name" value="ERF_plant"/>
</dbReference>
<dbReference type="PANTHER" id="PTHR31190">
    <property type="entry name" value="DNA-BINDING DOMAIN"/>
    <property type="match status" value="1"/>
</dbReference>
<dbReference type="PANTHER" id="PTHR31190:SF499">
    <property type="entry name" value="ETHYLENE-RESPONSIVE TRANSCRIPTION FACTOR ERF105"/>
    <property type="match status" value="1"/>
</dbReference>
<dbReference type="Pfam" id="PF00847">
    <property type="entry name" value="AP2"/>
    <property type="match status" value="1"/>
</dbReference>
<dbReference type="PRINTS" id="PR00367">
    <property type="entry name" value="ETHRSPELEMNT"/>
</dbReference>
<dbReference type="SMART" id="SM00380">
    <property type="entry name" value="AP2"/>
    <property type="match status" value="1"/>
</dbReference>
<dbReference type="SUPFAM" id="SSF54171">
    <property type="entry name" value="DNA-binding domain"/>
    <property type="match status" value="1"/>
</dbReference>
<dbReference type="PROSITE" id="PS51032">
    <property type="entry name" value="AP2_ERF"/>
    <property type="match status" value="1"/>
</dbReference>
<reference key="1">
    <citation type="journal article" date="1998" name="DNA Res.">
        <title>Structural analysis of Arabidopsis thaliana chromosome 5. IV. Sequence features of the regions of 1,456,315 bp covered by nineteen physically assigned P1 and TAC clones.</title>
        <authorList>
            <person name="Sato S."/>
            <person name="Kaneko T."/>
            <person name="Kotani H."/>
            <person name="Nakamura Y."/>
            <person name="Asamizu E."/>
            <person name="Miyajima N."/>
            <person name="Tabata S."/>
        </authorList>
    </citation>
    <scope>NUCLEOTIDE SEQUENCE [LARGE SCALE GENOMIC DNA]</scope>
    <source>
        <strain>cv. Columbia</strain>
    </source>
</reference>
<reference key="2">
    <citation type="journal article" date="2000" name="Nature">
        <title>Sequence and analysis of chromosome 5 of the plant Arabidopsis thaliana.</title>
        <authorList>
            <person name="Tabata S."/>
            <person name="Kaneko T."/>
            <person name="Nakamura Y."/>
            <person name="Kotani H."/>
            <person name="Kato T."/>
            <person name="Asamizu E."/>
            <person name="Miyajima N."/>
            <person name="Sasamoto S."/>
            <person name="Kimura T."/>
            <person name="Hosouchi T."/>
            <person name="Kawashima K."/>
            <person name="Kohara M."/>
            <person name="Matsumoto M."/>
            <person name="Matsuno A."/>
            <person name="Muraki A."/>
            <person name="Nakayama S."/>
            <person name="Nakazaki N."/>
            <person name="Naruo K."/>
            <person name="Okumura S."/>
            <person name="Shinpo S."/>
            <person name="Takeuchi C."/>
            <person name="Wada T."/>
            <person name="Watanabe A."/>
            <person name="Yamada M."/>
            <person name="Yasuda M."/>
            <person name="Sato S."/>
            <person name="de la Bastide M."/>
            <person name="Huang E."/>
            <person name="Spiegel L."/>
            <person name="Gnoj L."/>
            <person name="O'Shaughnessy A."/>
            <person name="Preston R."/>
            <person name="Habermann K."/>
            <person name="Murray J."/>
            <person name="Johnson D."/>
            <person name="Rohlfing T."/>
            <person name="Nelson J."/>
            <person name="Stoneking T."/>
            <person name="Pepin K."/>
            <person name="Spieth J."/>
            <person name="Sekhon M."/>
            <person name="Armstrong J."/>
            <person name="Becker M."/>
            <person name="Belter E."/>
            <person name="Cordum H."/>
            <person name="Cordes M."/>
            <person name="Courtney L."/>
            <person name="Courtney W."/>
            <person name="Dante M."/>
            <person name="Du H."/>
            <person name="Edwards J."/>
            <person name="Fryman J."/>
            <person name="Haakensen B."/>
            <person name="Lamar E."/>
            <person name="Latreille P."/>
            <person name="Leonard S."/>
            <person name="Meyer R."/>
            <person name="Mulvaney E."/>
            <person name="Ozersky P."/>
            <person name="Riley A."/>
            <person name="Strowmatt C."/>
            <person name="Wagner-McPherson C."/>
            <person name="Wollam A."/>
            <person name="Yoakum M."/>
            <person name="Bell M."/>
            <person name="Dedhia N."/>
            <person name="Parnell L."/>
            <person name="Shah R."/>
            <person name="Rodriguez M."/>
            <person name="Hoon See L."/>
            <person name="Vil D."/>
            <person name="Baker J."/>
            <person name="Kirchoff K."/>
            <person name="Toth K."/>
            <person name="King L."/>
            <person name="Bahret A."/>
            <person name="Miller B."/>
            <person name="Marra M.A."/>
            <person name="Martienssen R."/>
            <person name="McCombie W.R."/>
            <person name="Wilson R.K."/>
            <person name="Murphy G."/>
            <person name="Bancroft I."/>
            <person name="Volckaert G."/>
            <person name="Wambutt R."/>
            <person name="Duesterhoeft A."/>
            <person name="Stiekema W."/>
            <person name="Pohl T."/>
            <person name="Entian K.-D."/>
            <person name="Terryn N."/>
            <person name="Hartley N."/>
            <person name="Bent E."/>
            <person name="Johnson S."/>
            <person name="Langham S.-A."/>
            <person name="McCullagh B."/>
            <person name="Robben J."/>
            <person name="Grymonprez B."/>
            <person name="Zimmermann W."/>
            <person name="Ramsperger U."/>
            <person name="Wedler H."/>
            <person name="Balke K."/>
            <person name="Wedler E."/>
            <person name="Peters S."/>
            <person name="van Staveren M."/>
            <person name="Dirkse W."/>
            <person name="Mooijman P."/>
            <person name="Klein Lankhorst R."/>
            <person name="Weitzenegger T."/>
            <person name="Bothe G."/>
            <person name="Rose M."/>
            <person name="Hauf J."/>
            <person name="Berneiser S."/>
            <person name="Hempel S."/>
            <person name="Feldpausch M."/>
            <person name="Lamberth S."/>
            <person name="Villarroel R."/>
            <person name="Gielen J."/>
            <person name="Ardiles W."/>
            <person name="Bents O."/>
            <person name="Lemcke K."/>
            <person name="Kolesov G."/>
            <person name="Mayer K.F.X."/>
            <person name="Rudd S."/>
            <person name="Schoof H."/>
            <person name="Schueller C."/>
            <person name="Zaccaria P."/>
            <person name="Mewes H.-W."/>
            <person name="Bevan M."/>
            <person name="Fransz P.F."/>
        </authorList>
    </citation>
    <scope>NUCLEOTIDE SEQUENCE [LARGE SCALE GENOMIC DNA]</scope>
    <source>
        <strain>cv. Columbia</strain>
    </source>
</reference>
<reference key="3">
    <citation type="journal article" date="2017" name="Plant J.">
        <title>Araport11: a complete reannotation of the Arabidopsis thaliana reference genome.</title>
        <authorList>
            <person name="Cheng C.Y."/>
            <person name="Krishnakumar V."/>
            <person name="Chan A.P."/>
            <person name="Thibaud-Nissen F."/>
            <person name="Schobel S."/>
            <person name="Town C.D."/>
        </authorList>
    </citation>
    <scope>GENOME REANNOTATION</scope>
    <source>
        <strain>cv. Columbia</strain>
    </source>
</reference>
<reference key="4">
    <citation type="journal article" date="2003" name="Science">
        <title>Empirical analysis of transcriptional activity in the Arabidopsis genome.</title>
        <authorList>
            <person name="Yamada K."/>
            <person name="Lim J."/>
            <person name="Dale J.M."/>
            <person name="Chen H."/>
            <person name="Shinn P."/>
            <person name="Palm C.J."/>
            <person name="Southwick A.M."/>
            <person name="Wu H.C."/>
            <person name="Kim C.J."/>
            <person name="Nguyen M."/>
            <person name="Pham P.K."/>
            <person name="Cheuk R.F."/>
            <person name="Karlin-Newmann G."/>
            <person name="Liu S.X."/>
            <person name="Lam B."/>
            <person name="Sakano H."/>
            <person name="Wu T."/>
            <person name="Yu G."/>
            <person name="Miranda M."/>
            <person name="Quach H.L."/>
            <person name="Tripp M."/>
            <person name="Chang C.H."/>
            <person name="Lee J.M."/>
            <person name="Toriumi M.J."/>
            <person name="Chan M.M."/>
            <person name="Tang C.C."/>
            <person name="Onodera C.S."/>
            <person name="Deng J.M."/>
            <person name="Akiyama K."/>
            <person name="Ansari Y."/>
            <person name="Arakawa T."/>
            <person name="Banh J."/>
            <person name="Banno F."/>
            <person name="Bowser L."/>
            <person name="Brooks S.Y."/>
            <person name="Carninci P."/>
            <person name="Chao Q."/>
            <person name="Choy N."/>
            <person name="Enju A."/>
            <person name="Goldsmith A.D."/>
            <person name="Gurjal M."/>
            <person name="Hansen N.F."/>
            <person name="Hayashizaki Y."/>
            <person name="Johnson-Hopson C."/>
            <person name="Hsuan V.W."/>
            <person name="Iida K."/>
            <person name="Karnes M."/>
            <person name="Khan S."/>
            <person name="Koesema E."/>
            <person name="Ishida J."/>
            <person name="Jiang P.X."/>
            <person name="Jones T."/>
            <person name="Kawai J."/>
            <person name="Kamiya A."/>
            <person name="Meyers C."/>
            <person name="Nakajima M."/>
            <person name="Narusaka M."/>
            <person name="Seki M."/>
            <person name="Sakurai T."/>
            <person name="Satou M."/>
            <person name="Tamse R."/>
            <person name="Vaysberg M."/>
            <person name="Wallender E.K."/>
            <person name="Wong C."/>
            <person name="Yamamura Y."/>
            <person name="Yuan S."/>
            <person name="Shinozaki K."/>
            <person name="Davis R.W."/>
            <person name="Theologis A."/>
            <person name="Ecker J.R."/>
        </authorList>
    </citation>
    <scope>NUCLEOTIDE SEQUENCE [LARGE SCALE MRNA]</scope>
    <source>
        <strain>cv. Columbia</strain>
    </source>
</reference>
<reference key="5">
    <citation type="journal article" date="2006" name="Plant Physiol.">
        <title>Genome-wide analysis of the ERF gene family in Arabidopsis and rice.</title>
        <authorList>
            <person name="Nakano T."/>
            <person name="Suzuki K."/>
            <person name="Fujimura T."/>
            <person name="Shinshi H."/>
        </authorList>
    </citation>
    <scope>GENE FAMILY</scope>
    <scope>NOMENCLATURE</scope>
</reference>
<organism>
    <name type="scientific">Arabidopsis thaliana</name>
    <name type="common">Mouse-ear cress</name>
    <dbReference type="NCBI Taxonomy" id="3702"/>
    <lineage>
        <taxon>Eukaryota</taxon>
        <taxon>Viridiplantae</taxon>
        <taxon>Streptophyta</taxon>
        <taxon>Embryophyta</taxon>
        <taxon>Tracheophyta</taxon>
        <taxon>Spermatophyta</taxon>
        <taxon>Magnoliopsida</taxon>
        <taxon>eudicotyledons</taxon>
        <taxon>Gunneridae</taxon>
        <taxon>Pentapetalae</taxon>
        <taxon>rosids</taxon>
        <taxon>malvids</taxon>
        <taxon>Brassicales</taxon>
        <taxon>Brassicaceae</taxon>
        <taxon>Camelineae</taxon>
        <taxon>Arabidopsis</taxon>
    </lineage>
</organism>
<evidence type="ECO:0000250" key="1"/>
<evidence type="ECO:0000255" key="2">
    <source>
        <dbReference type="PROSITE-ProRule" id="PRU00366"/>
    </source>
</evidence>
<evidence type="ECO:0000256" key="3">
    <source>
        <dbReference type="SAM" id="MobiDB-lite"/>
    </source>
</evidence>
<evidence type="ECO:0000305" key="4"/>
<name>EF106_ARATH</name>
<feature type="chain" id="PRO_0000290419" description="Ethylene-responsive transcription factor ERF106">
    <location>
        <begin position="1"/>
        <end position="207"/>
    </location>
</feature>
<feature type="DNA-binding region" description="AP2/ERF" evidence="2">
    <location>
        <begin position="109"/>
        <end position="167"/>
    </location>
</feature>
<feature type="region of interest" description="Disordered" evidence="3">
    <location>
        <begin position="70"/>
        <end position="101"/>
    </location>
</feature>
<feature type="region of interest" description="Disordered" evidence="3">
    <location>
        <begin position="171"/>
        <end position="207"/>
    </location>
</feature>
<feature type="compositionally biased region" description="Low complexity" evidence="3">
    <location>
        <begin position="74"/>
        <end position="87"/>
    </location>
</feature>
<feature type="compositionally biased region" description="Low complexity" evidence="3">
    <location>
        <begin position="197"/>
        <end position="207"/>
    </location>
</feature>